<keyword id="KW-0067">ATP-binding</keyword>
<keyword id="KW-0963">Cytoplasm</keyword>
<keyword id="KW-0418">Kinase</keyword>
<keyword id="KW-0460">Magnesium</keyword>
<keyword id="KW-0479">Metal-binding</keyword>
<keyword id="KW-0546">Nucleotide metabolism</keyword>
<keyword id="KW-0547">Nucleotide-binding</keyword>
<keyword id="KW-0597">Phosphoprotein</keyword>
<keyword id="KW-1185">Reference proteome</keyword>
<keyword id="KW-0808">Transferase</keyword>
<proteinExistence type="inferred from homology"/>
<feature type="chain" id="PRO_0000137008" description="Nucleoside diphosphate kinase">
    <location>
        <begin position="1"/>
        <end position="136"/>
    </location>
</feature>
<feature type="active site" description="Pros-phosphohistidine intermediate" evidence="1">
    <location>
        <position position="117"/>
    </location>
</feature>
<feature type="binding site" evidence="1">
    <location>
        <position position="10"/>
    </location>
    <ligand>
        <name>ATP</name>
        <dbReference type="ChEBI" id="CHEBI:30616"/>
    </ligand>
</feature>
<feature type="binding site" evidence="1">
    <location>
        <position position="58"/>
    </location>
    <ligand>
        <name>ATP</name>
        <dbReference type="ChEBI" id="CHEBI:30616"/>
    </ligand>
</feature>
<feature type="binding site" evidence="1">
    <location>
        <position position="86"/>
    </location>
    <ligand>
        <name>ATP</name>
        <dbReference type="ChEBI" id="CHEBI:30616"/>
    </ligand>
</feature>
<feature type="binding site" evidence="1">
    <location>
        <position position="92"/>
    </location>
    <ligand>
        <name>ATP</name>
        <dbReference type="ChEBI" id="CHEBI:30616"/>
    </ligand>
</feature>
<feature type="binding site" evidence="1">
    <location>
        <position position="104"/>
    </location>
    <ligand>
        <name>ATP</name>
        <dbReference type="ChEBI" id="CHEBI:30616"/>
    </ligand>
</feature>
<feature type="binding site" evidence="1">
    <location>
        <position position="114"/>
    </location>
    <ligand>
        <name>ATP</name>
        <dbReference type="ChEBI" id="CHEBI:30616"/>
    </ligand>
</feature>
<sequence>MTERTLVLIKPDGVQRQLVGEIIGRIERKGLTLVALELRHVSQDLAAQHYAEHEGKPFFASLLEFITSGPVVAAIVEGPRAIAAFRQLAGGTDPVEKAIPGTIRGDFGLETQFNLVHGSDSVESAKREIGLWFPDA</sequence>
<comment type="function">
    <text evidence="1">Major role in the synthesis of nucleoside triphosphates other than ATP. The ATP gamma phosphate is transferred to the NDP beta phosphate via a ping-pong mechanism, using a phosphorylated active-site intermediate.</text>
</comment>
<comment type="catalytic activity">
    <reaction evidence="1">
        <text>a 2'-deoxyribonucleoside 5'-diphosphate + ATP = a 2'-deoxyribonucleoside 5'-triphosphate + ADP</text>
        <dbReference type="Rhea" id="RHEA:44640"/>
        <dbReference type="ChEBI" id="CHEBI:30616"/>
        <dbReference type="ChEBI" id="CHEBI:61560"/>
        <dbReference type="ChEBI" id="CHEBI:73316"/>
        <dbReference type="ChEBI" id="CHEBI:456216"/>
        <dbReference type="EC" id="2.7.4.6"/>
    </reaction>
</comment>
<comment type="catalytic activity">
    <reaction evidence="1">
        <text>a ribonucleoside 5'-diphosphate + ATP = a ribonucleoside 5'-triphosphate + ADP</text>
        <dbReference type="Rhea" id="RHEA:18113"/>
        <dbReference type="ChEBI" id="CHEBI:30616"/>
        <dbReference type="ChEBI" id="CHEBI:57930"/>
        <dbReference type="ChEBI" id="CHEBI:61557"/>
        <dbReference type="ChEBI" id="CHEBI:456216"/>
        <dbReference type="EC" id="2.7.4.6"/>
    </reaction>
</comment>
<comment type="cofactor">
    <cofactor evidence="1">
        <name>Mg(2+)</name>
        <dbReference type="ChEBI" id="CHEBI:18420"/>
    </cofactor>
</comment>
<comment type="subunit">
    <text evidence="1">Homotetramer.</text>
</comment>
<comment type="subcellular location">
    <subcellularLocation>
        <location evidence="1">Cytoplasm</location>
    </subcellularLocation>
</comment>
<comment type="similarity">
    <text evidence="1">Belongs to the NDK family.</text>
</comment>
<accession>Q73XP1</accession>
<organism>
    <name type="scientific">Mycolicibacterium paratuberculosis (strain ATCC BAA-968 / K-10)</name>
    <name type="common">Mycobacterium paratuberculosis</name>
    <dbReference type="NCBI Taxonomy" id="262316"/>
    <lineage>
        <taxon>Bacteria</taxon>
        <taxon>Bacillati</taxon>
        <taxon>Actinomycetota</taxon>
        <taxon>Actinomycetes</taxon>
        <taxon>Mycobacteriales</taxon>
        <taxon>Mycobacteriaceae</taxon>
        <taxon>Mycobacterium</taxon>
        <taxon>Mycobacterium avium complex (MAC)</taxon>
    </lineage>
</organism>
<gene>
    <name evidence="1" type="primary">ndk</name>
    <name type="ordered locus">MAP_2268c</name>
</gene>
<protein>
    <recommendedName>
        <fullName evidence="1">Nucleoside diphosphate kinase</fullName>
        <shortName evidence="1">NDK</shortName>
        <shortName evidence="1">NDP kinase</shortName>
        <ecNumber evidence="1">2.7.4.6</ecNumber>
    </recommendedName>
    <alternativeName>
        <fullName evidence="1">Nucleoside-2-P kinase</fullName>
    </alternativeName>
</protein>
<evidence type="ECO:0000255" key="1">
    <source>
        <dbReference type="HAMAP-Rule" id="MF_00451"/>
    </source>
</evidence>
<reference key="1">
    <citation type="journal article" date="2005" name="Proc. Natl. Acad. Sci. U.S.A.">
        <title>The complete genome sequence of Mycobacterium avium subspecies paratuberculosis.</title>
        <authorList>
            <person name="Li L."/>
            <person name="Bannantine J.P."/>
            <person name="Zhang Q."/>
            <person name="Amonsin A."/>
            <person name="May B.J."/>
            <person name="Alt D."/>
            <person name="Banerji N."/>
            <person name="Kanjilal S."/>
            <person name="Kapur V."/>
        </authorList>
    </citation>
    <scope>NUCLEOTIDE SEQUENCE [LARGE SCALE GENOMIC DNA]</scope>
    <source>
        <strain>ATCC BAA-968 / K-10</strain>
    </source>
</reference>
<dbReference type="EC" id="2.7.4.6" evidence="1"/>
<dbReference type="EMBL" id="AE016958">
    <property type="protein sequence ID" value="AAS04585.1"/>
    <property type="molecule type" value="Genomic_DNA"/>
</dbReference>
<dbReference type="RefSeq" id="WP_003875860.1">
    <property type="nucleotide sequence ID" value="NZ_CP106873.1"/>
</dbReference>
<dbReference type="SMR" id="Q73XP1"/>
<dbReference type="STRING" id="262316.MAP_2268c"/>
<dbReference type="GeneID" id="75269502"/>
<dbReference type="KEGG" id="mpa:MAP_2268c"/>
<dbReference type="eggNOG" id="COG0105">
    <property type="taxonomic scope" value="Bacteria"/>
</dbReference>
<dbReference type="HOGENOM" id="CLU_060216_6_3_11"/>
<dbReference type="Proteomes" id="UP000000580">
    <property type="component" value="Chromosome"/>
</dbReference>
<dbReference type="GO" id="GO:0005737">
    <property type="term" value="C:cytoplasm"/>
    <property type="evidence" value="ECO:0007669"/>
    <property type="project" value="UniProtKB-SubCell"/>
</dbReference>
<dbReference type="GO" id="GO:0005524">
    <property type="term" value="F:ATP binding"/>
    <property type="evidence" value="ECO:0007669"/>
    <property type="project" value="UniProtKB-UniRule"/>
</dbReference>
<dbReference type="GO" id="GO:0046872">
    <property type="term" value="F:metal ion binding"/>
    <property type="evidence" value="ECO:0007669"/>
    <property type="project" value="UniProtKB-KW"/>
</dbReference>
<dbReference type="GO" id="GO:0004550">
    <property type="term" value="F:nucleoside diphosphate kinase activity"/>
    <property type="evidence" value="ECO:0007669"/>
    <property type="project" value="UniProtKB-UniRule"/>
</dbReference>
<dbReference type="GO" id="GO:0006241">
    <property type="term" value="P:CTP biosynthetic process"/>
    <property type="evidence" value="ECO:0007669"/>
    <property type="project" value="UniProtKB-UniRule"/>
</dbReference>
<dbReference type="GO" id="GO:0006183">
    <property type="term" value="P:GTP biosynthetic process"/>
    <property type="evidence" value="ECO:0007669"/>
    <property type="project" value="UniProtKB-UniRule"/>
</dbReference>
<dbReference type="GO" id="GO:0006228">
    <property type="term" value="P:UTP biosynthetic process"/>
    <property type="evidence" value="ECO:0007669"/>
    <property type="project" value="UniProtKB-UniRule"/>
</dbReference>
<dbReference type="CDD" id="cd04413">
    <property type="entry name" value="NDPk_I"/>
    <property type="match status" value="1"/>
</dbReference>
<dbReference type="FunFam" id="3.30.70.141:FF:000003">
    <property type="entry name" value="Nucleoside diphosphate kinase"/>
    <property type="match status" value="1"/>
</dbReference>
<dbReference type="Gene3D" id="3.30.70.141">
    <property type="entry name" value="Nucleoside diphosphate kinase-like domain"/>
    <property type="match status" value="1"/>
</dbReference>
<dbReference type="HAMAP" id="MF_00451">
    <property type="entry name" value="NDP_kinase"/>
    <property type="match status" value="1"/>
</dbReference>
<dbReference type="InterPro" id="IPR034907">
    <property type="entry name" value="NDK-like_dom"/>
</dbReference>
<dbReference type="InterPro" id="IPR036850">
    <property type="entry name" value="NDK-like_dom_sf"/>
</dbReference>
<dbReference type="InterPro" id="IPR001564">
    <property type="entry name" value="Nucleoside_diP_kinase"/>
</dbReference>
<dbReference type="InterPro" id="IPR023005">
    <property type="entry name" value="Nucleoside_diP_kinase_AS"/>
</dbReference>
<dbReference type="NCBIfam" id="NF001908">
    <property type="entry name" value="PRK00668.1"/>
    <property type="match status" value="1"/>
</dbReference>
<dbReference type="PANTHER" id="PTHR11349">
    <property type="entry name" value="NUCLEOSIDE DIPHOSPHATE KINASE"/>
    <property type="match status" value="1"/>
</dbReference>
<dbReference type="Pfam" id="PF00334">
    <property type="entry name" value="NDK"/>
    <property type="match status" value="1"/>
</dbReference>
<dbReference type="PRINTS" id="PR01243">
    <property type="entry name" value="NUCDPKINASE"/>
</dbReference>
<dbReference type="SMART" id="SM00562">
    <property type="entry name" value="NDK"/>
    <property type="match status" value="1"/>
</dbReference>
<dbReference type="SUPFAM" id="SSF54919">
    <property type="entry name" value="Nucleoside diphosphate kinase, NDK"/>
    <property type="match status" value="1"/>
</dbReference>
<dbReference type="PROSITE" id="PS00469">
    <property type="entry name" value="NDPK"/>
    <property type="match status" value="1"/>
</dbReference>
<dbReference type="PROSITE" id="PS51374">
    <property type="entry name" value="NDPK_LIKE"/>
    <property type="match status" value="1"/>
</dbReference>
<name>NDK_MYCPA</name>